<gene>
    <name type="primary">NUDT22</name>
    <name type="synonym">NUDX22</name>
    <name type="ordered locus">At2g33980</name>
    <name type="ORF">T1B8.19</name>
</gene>
<evidence type="ECO:0000250" key="1"/>
<evidence type="ECO:0000255" key="2"/>
<evidence type="ECO:0000255" key="3">
    <source>
        <dbReference type="PROSITE-ProRule" id="PRU00794"/>
    </source>
</evidence>
<evidence type="ECO:0000269" key="4">
    <source>
    </source>
</evidence>
<evidence type="ECO:0000305" key="5"/>
<accession>O22951</accession>
<accession>Q9C5F2</accession>
<name>NUD22_ARATH</name>
<keyword id="KW-0150">Chloroplast</keyword>
<keyword id="KW-0378">Hydrolase</keyword>
<keyword id="KW-0460">Magnesium</keyword>
<keyword id="KW-0464">Manganese</keyword>
<keyword id="KW-0479">Metal-binding</keyword>
<keyword id="KW-0934">Plastid</keyword>
<keyword id="KW-1185">Reference proteome</keyword>
<keyword id="KW-0809">Transit peptide</keyword>
<sequence length="302" mass="33914">MKSGASAASPTAKSFNFGSSRLLALAQQLRVYKPPLSSSFDEREELLAYKESTRKSITHVGFQESMAPVRFRPKKAAVLICLFEGDDGDLRVILTKRSSTLSTHSGEVSLPGGKAEEHDKDDGITATREAEEEIGLDPSLVDVVAFLEPFLSQHLLRVIPVVGILWDRKAFNPTPNPAEVEAVLDAPFEMFLKDENRRSEEFDWMGEKHLVHFFDYKTGDSDYVIWGLTARILIRAATVVYQRPPAFIEQKPNLKYSKMNQATRLYGWLKPLANLHESCENGRLLGHVPAYCLRYLVGISSR</sequence>
<reference key="1">
    <citation type="journal article" date="1999" name="Nature">
        <title>Sequence and analysis of chromosome 2 of the plant Arabidopsis thaliana.</title>
        <authorList>
            <person name="Lin X."/>
            <person name="Kaul S."/>
            <person name="Rounsley S.D."/>
            <person name="Shea T.P."/>
            <person name="Benito M.-I."/>
            <person name="Town C.D."/>
            <person name="Fujii C.Y."/>
            <person name="Mason T.M."/>
            <person name="Bowman C.L."/>
            <person name="Barnstead M.E."/>
            <person name="Feldblyum T.V."/>
            <person name="Buell C.R."/>
            <person name="Ketchum K.A."/>
            <person name="Lee J.J."/>
            <person name="Ronning C.M."/>
            <person name="Koo H.L."/>
            <person name="Moffat K.S."/>
            <person name="Cronin L.A."/>
            <person name="Shen M."/>
            <person name="Pai G."/>
            <person name="Van Aken S."/>
            <person name="Umayam L."/>
            <person name="Tallon L.J."/>
            <person name="Gill J.E."/>
            <person name="Adams M.D."/>
            <person name="Carrera A.J."/>
            <person name="Creasy T.H."/>
            <person name="Goodman H.M."/>
            <person name="Somerville C.R."/>
            <person name="Copenhaver G.P."/>
            <person name="Preuss D."/>
            <person name="Nierman W.C."/>
            <person name="White O."/>
            <person name="Eisen J.A."/>
            <person name="Salzberg S.L."/>
            <person name="Fraser C.M."/>
            <person name="Venter J.C."/>
        </authorList>
    </citation>
    <scope>NUCLEOTIDE SEQUENCE [LARGE SCALE GENOMIC DNA]</scope>
    <source>
        <strain>cv. Columbia</strain>
    </source>
</reference>
<reference key="2">
    <citation type="journal article" date="2017" name="Plant J.">
        <title>Araport11: a complete reannotation of the Arabidopsis thaliana reference genome.</title>
        <authorList>
            <person name="Cheng C.Y."/>
            <person name="Krishnakumar V."/>
            <person name="Chan A.P."/>
            <person name="Thibaud-Nissen F."/>
            <person name="Schobel S."/>
            <person name="Town C.D."/>
        </authorList>
    </citation>
    <scope>GENOME REANNOTATION</scope>
    <source>
        <strain>cv. Columbia</strain>
    </source>
</reference>
<reference key="3">
    <citation type="journal article" date="2003" name="Science">
        <title>Empirical analysis of transcriptional activity in the Arabidopsis genome.</title>
        <authorList>
            <person name="Yamada K."/>
            <person name="Lim J."/>
            <person name="Dale J.M."/>
            <person name="Chen H."/>
            <person name="Shinn P."/>
            <person name="Palm C.J."/>
            <person name="Southwick A.M."/>
            <person name="Wu H.C."/>
            <person name="Kim C.J."/>
            <person name="Nguyen M."/>
            <person name="Pham P.K."/>
            <person name="Cheuk R.F."/>
            <person name="Karlin-Newmann G."/>
            <person name="Liu S.X."/>
            <person name="Lam B."/>
            <person name="Sakano H."/>
            <person name="Wu T."/>
            <person name="Yu G."/>
            <person name="Miranda M."/>
            <person name="Quach H.L."/>
            <person name="Tripp M."/>
            <person name="Chang C.H."/>
            <person name="Lee J.M."/>
            <person name="Toriumi M.J."/>
            <person name="Chan M.M."/>
            <person name="Tang C.C."/>
            <person name="Onodera C.S."/>
            <person name="Deng J.M."/>
            <person name="Akiyama K."/>
            <person name="Ansari Y."/>
            <person name="Arakawa T."/>
            <person name="Banh J."/>
            <person name="Banno F."/>
            <person name="Bowser L."/>
            <person name="Brooks S.Y."/>
            <person name="Carninci P."/>
            <person name="Chao Q."/>
            <person name="Choy N."/>
            <person name="Enju A."/>
            <person name="Goldsmith A.D."/>
            <person name="Gurjal M."/>
            <person name="Hansen N.F."/>
            <person name="Hayashizaki Y."/>
            <person name="Johnson-Hopson C."/>
            <person name="Hsuan V.W."/>
            <person name="Iida K."/>
            <person name="Karnes M."/>
            <person name="Khan S."/>
            <person name="Koesema E."/>
            <person name="Ishida J."/>
            <person name="Jiang P.X."/>
            <person name="Jones T."/>
            <person name="Kawai J."/>
            <person name="Kamiya A."/>
            <person name="Meyers C."/>
            <person name="Nakajima M."/>
            <person name="Narusaka M."/>
            <person name="Seki M."/>
            <person name="Sakurai T."/>
            <person name="Satou M."/>
            <person name="Tamse R."/>
            <person name="Vaysberg M."/>
            <person name="Wallender E.K."/>
            <person name="Wong C."/>
            <person name="Yamamura Y."/>
            <person name="Yuan S."/>
            <person name="Shinozaki K."/>
            <person name="Davis R.W."/>
            <person name="Theologis A."/>
            <person name="Ecker J.R."/>
        </authorList>
    </citation>
    <scope>NUCLEOTIDE SEQUENCE [LARGE SCALE MRNA]</scope>
    <source>
        <strain>cv. Columbia</strain>
    </source>
</reference>
<reference key="4">
    <citation type="submission" date="2004-09" db="EMBL/GenBank/DDBJ databases">
        <title>Large-scale analysis of RIKEN Arabidopsis full-length (RAFL) cDNAs.</title>
        <authorList>
            <person name="Totoki Y."/>
            <person name="Seki M."/>
            <person name="Ishida J."/>
            <person name="Nakajima M."/>
            <person name="Enju A."/>
            <person name="Kamiya A."/>
            <person name="Narusaka M."/>
            <person name="Shin-i T."/>
            <person name="Nakagawa M."/>
            <person name="Sakamoto N."/>
            <person name="Oishi K."/>
            <person name="Kohara Y."/>
            <person name="Kobayashi M."/>
            <person name="Toyoda A."/>
            <person name="Sakaki Y."/>
            <person name="Sakurai T."/>
            <person name="Iida K."/>
            <person name="Akiyama K."/>
            <person name="Satou M."/>
            <person name="Toyoda T."/>
            <person name="Konagaya A."/>
            <person name="Carninci P."/>
            <person name="Kawai J."/>
            <person name="Hayashizaki Y."/>
            <person name="Shinozaki K."/>
        </authorList>
    </citation>
    <scope>NUCLEOTIDE SEQUENCE [LARGE SCALE MRNA]</scope>
    <source>
        <strain>cv. Columbia</strain>
    </source>
</reference>
<reference key="5">
    <citation type="journal article" date="2005" name="J. Biol. Chem.">
        <title>Comprehensive analysis of cytosolic nudix hydrolases in Arabidopsis thaliana.</title>
        <authorList>
            <person name="Ogawa T."/>
            <person name="Ueda Y."/>
            <person name="Yoshimura K."/>
            <person name="Shigeoka S."/>
        </authorList>
    </citation>
    <scope>NOMENCLATURE</scope>
</reference>
<reference key="6">
    <citation type="journal article" date="2008" name="Plant Physiol.">
        <title>Molecular characterization of organelle-type Nudix hydrolases in Arabidopsis.</title>
        <authorList>
            <person name="Ogawa T."/>
            <person name="Yoshimura K."/>
            <person name="Miyake H."/>
            <person name="Ishikawa K."/>
            <person name="Ito D."/>
            <person name="Tanabe N."/>
            <person name="Shigeoka S."/>
        </authorList>
    </citation>
    <scope>TISSUE SPECIFICITY</scope>
</reference>
<dbReference type="EC" id="3.6.1.-"/>
<dbReference type="EMBL" id="AC002341">
    <property type="protein sequence ID" value="AAB67616.2"/>
    <property type="molecule type" value="Genomic_DNA"/>
</dbReference>
<dbReference type="EMBL" id="U78721">
    <property type="protein sequence ID" value="AAM15520.1"/>
    <property type="molecule type" value="Genomic_DNA"/>
</dbReference>
<dbReference type="EMBL" id="CP002685">
    <property type="protein sequence ID" value="AEC08903.1"/>
    <property type="molecule type" value="Genomic_DNA"/>
</dbReference>
<dbReference type="EMBL" id="AF360290">
    <property type="protein sequence ID" value="AAK26000.1"/>
    <property type="molecule type" value="mRNA"/>
</dbReference>
<dbReference type="EMBL" id="AY051046">
    <property type="protein sequence ID" value="AAK93723.1"/>
    <property type="molecule type" value="mRNA"/>
</dbReference>
<dbReference type="EMBL" id="AK175540">
    <property type="protein sequence ID" value="BAD43303.1"/>
    <property type="molecule type" value="mRNA"/>
</dbReference>
<dbReference type="PIR" id="H84750">
    <property type="entry name" value="H84750"/>
</dbReference>
<dbReference type="RefSeq" id="NP_565776.1">
    <property type="nucleotide sequence ID" value="NM_128949.3"/>
</dbReference>
<dbReference type="SMR" id="O22951"/>
<dbReference type="BioGRID" id="3306">
    <property type="interactions" value="1"/>
</dbReference>
<dbReference type="FunCoup" id="O22951">
    <property type="interactions" value="945"/>
</dbReference>
<dbReference type="STRING" id="3702.O22951"/>
<dbReference type="PaxDb" id="3702-AT2G33980.1"/>
<dbReference type="ProteomicsDB" id="248664"/>
<dbReference type="EnsemblPlants" id="AT2G33980.1">
    <property type="protein sequence ID" value="AT2G33980.1"/>
    <property type="gene ID" value="AT2G33980"/>
</dbReference>
<dbReference type="GeneID" id="817959"/>
<dbReference type="Gramene" id="AT2G33980.1">
    <property type="protein sequence ID" value="AT2G33980.1"/>
    <property type="gene ID" value="AT2G33980"/>
</dbReference>
<dbReference type="KEGG" id="ath:AT2G33980"/>
<dbReference type="Araport" id="AT2G33980"/>
<dbReference type="TAIR" id="AT2G33980">
    <property type="gene designation" value="NUDT22"/>
</dbReference>
<dbReference type="eggNOG" id="KOG3069">
    <property type="taxonomic scope" value="Eukaryota"/>
</dbReference>
<dbReference type="HOGENOM" id="CLU_040940_8_0_1"/>
<dbReference type="InParanoid" id="O22951"/>
<dbReference type="PhylomeDB" id="O22951"/>
<dbReference type="PRO" id="PR:O22951"/>
<dbReference type="Proteomes" id="UP000006548">
    <property type="component" value="Chromosome 2"/>
</dbReference>
<dbReference type="ExpressionAtlas" id="O22951">
    <property type="expression patterns" value="baseline and differential"/>
</dbReference>
<dbReference type="GO" id="GO:0009507">
    <property type="term" value="C:chloroplast"/>
    <property type="evidence" value="ECO:0007669"/>
    <property type="project" value="UniProtKB-SubCell"/>
</dbReference>
<dbReference type="GO" id="GO:0010945">
    <property type="term" value="F:coenzyme A diphosphatase activity"/>
    <property type="evidence" value="ECO:0007669"/>
    <property type="project" value="InterPro"/>
</dbReference>
<dbReference type="GO" id="GO:0046872">
    <property type="term" value="F:metal ion binding"/>
    <property type="evidence" value="ECO:0007669"/>
    <property type="project" value="UniProtKB-KW"/>
</dbReference>
<dbReference type="CDD" id="cd03426">
    <property type="entry name" value="NUDIX_CoAse_Nudt7"/>
    <property type="match status" value="1"/>
</dbReference>
<dbReference type="FunFam" id="3.90.79.10:FF:000036">
    <property type="entry name" value="Nudix hydrolase 11"/>
    <property type="match status" value="1"/>
</dbReference>
<dbReference type="Gene3D" id="3.90.79.10">
    <property type="entry name" value="Nucleoside Triphosphate Pyrophosphohydrolase"/>
    <property type="match status" value="1"/>
</dbReference>
<dbReference type="InterPro" id="IPR045121">
    <property type="entry name" value="CoAse"/>
</dbReference>
<dbReference type="InterPro" id="IPR015797">
    <property type="entry name" value="NUDIX_hydrolase-like_dom_sf"/>
</dbReference>
<dbReference type="InterPro" id="IPR030674">
    <property type="entry name" value="Nudix_hydrolase_AtNUDT22"/>
</dbReference>
<dbReference type="InterPro" id="IPR000086">
    <property type="entry name" value="NUDIX_hydrolase_dom"/>
</dbReference>
<dbReference type="PANTHER" id="PTHR12992">
    <property type="entry name" value="NUDIX HYDROLASE"/>
    <property type="match status" value="1"/>
</dbReference>
<dbReference type="PANTHER" id="PTHR12992:SF24">
    <property type="entry name" value="PEROXISOMAL COENZYME A DIPHOSPHATASE NUDT7"/>
    <property type="match status" value="1"/>
</dbReference>
<dbReference type="Pfam" id="PF00293">
    <property type="entry name" value="NUDIX"/>
    <property type="match status" value="1"/>
</dbReference>
<dbReference type="PIRSF" id="PIRSF038132">
    <property type="entry name" value="Nudix_hydrolase_AtNUDT22"/>
    <property type="match status" value="1"/>
</dbReference>
<dbReference type="SUPFAM" id="SSF55811">
    <property type="entry name" value="Nudix"/>
    <property type="match status" value="1"/>
</dbReference>
<dbReference type="PROSITE" id="PS51462">
    <property type="entry name" value="NUDIX"/>
    <property type="match status" value="1"/>
</dbReference>
<protein>
    <recommendedName>
        <fullName>Nudix hydrolase 22, chloroplastic</fullName>
        <shortName>AtNUDT22</shortName>
        <ecNumber>3.6.1.-</ecNumber>
    </recommendedName>
</protein>
<feature type="transit peptide" description="Chloroplast" evidence="2">
    <location>
        <begin position="1"/>
        <end position="25"/>
    </location>
</feature>
<feature type="chain" id="PRO_0000019964" description="Nudix hydrolase 22, chloroplastic">
    <location>
        <begin position="26"/>
        <end position="302"/>
    </location>
</feature>
<feature type="domain" description="Nudix hydrolase" evidence="3">
    <location>
        <begin position="73"/>
        <end position="229"/>
    </location>
</feature>
<feature type="short sequence motif" description="Nudix box">
    <location>
        <begin position="114"/>
        <end position="135"/>
    </location>
</feature>
<feature type="binding site" evidence="1">
    <location>
        <position position="129"/>
    </location>
    <ligand>
        <name>Mg(2+)</name>
        <dbReference type="ChEBI" id="CHEBI:18420"/>
    </ligand>
</feature>
<feature type="binding site" evidence="1">
    <location>
        <position position="133"/>
    </location>
    <ligand>
        <name>Mg(2+)</name>
        <dbReference type="ChEBI" id="CHEBI:18420"/>
    </ligand>
</feature>
<comment type="function">
    <text evidence="1">Probably mediates the hydrolysis of some nucleoside diphosphate derivatives.</text>
</comment>
<comment type="cofactor">
    <cofactor evidence="1">
        <name>Mg(2+)</name>
        <dbReference type="ChEBI" id="CHEBI:18420"/>
    </cofactor>
    <cofactor evidence="1">
        <name>Mn(2+)</name>
        <dbReference type="ChEBI" id="CHEBI:29035"/>
    </cofactor>
</comment>
<comment type="subcellular location">
    <subcellularLocation>
        <location evidence="5">Plastid</location>
        <location evidence="5">Chloroplast</location>
    </subcellularLocation>
</comment>
<comment type="tissue specificity">
    <text evidence="4">Expressed in roots, leaves, stems and inflorescences.</text>
</comment>
<comment type="similarity">
    <text evidence="5">Belongs to the Nudix hydrolase family.</text>
</comment>
<proteinExistence type="evidence at transcript level"/>
<organism>
    <name type="scientific">Arabidopsis thaliana</name>
    <name type="common">Mouse-ear cress</name>
    <dbReference type="NCBI Taxonomy" id="3702"/>
    <lineage>
        <taxon>Eukaryota</taxon>
        <taxon>Viridiplantae</taxon>
        <taxon>Streptophyta</taxon>
        <taxon>Embryophyta</taxon>
        <taxon>Tracheophyta</taxon>
        <taxon>Spermatophyta</taxon>
        <taxon>Magnoliopsida</taxon>
        <taxon>eudicotyledons</taxon>
        <taxon>Gunneridae</taxon>
        <taxon>Pentapetalae</taxon>
        <taxon>rosids</taxon>
        <taxon>malvids</taxon>
        <taxon>Brassicales</taxon>
        <taxon>Brassicaceae</taxon>
        <taxon>Camelineae</taxon>
        <taxon>Arabidopsis</taxon>
    </lineage>
</organism>